<feature type="chain" id="PRO_0000235340" description="T-cell activation inhibitor, mitochondrial">
    <location>
        <begin position="1"/>
        <end position="496"/>
    </location>
</feature>
<feature type="coiled-coil region" evidence="2">
    <location>
        <begin position="404"/>
        <end position="437"/>
    </location>
</feature>
<feature type="splice variant" id="VSP_038421" description="In isoform 4." evidence="3 4">
    <location>
        <begin position="1"/>
        <end position="144"/>
    </location>
</feature>
<feature type="splice variant" id="VSP_018469" description="In isoform 3." evidence="3 4">
    <original>EINENSLKRLSVYLE</original>
    <variation>DDTWKSFQCPSDFSL</variation>
    <location>
        <begin position="56"/>
        <end position="70"/>
    </location>
</feature>
<feature type="splice variant" id="VSP_018470" description="In isoform 3." evidence="3 4">
    <location>
        <begin position="71"/>
        <end position="496"/>
    </location>
</feature>
<feature type="splice variant" id="VSP_018471" description="In isoform 2." evidence="4">
    <original>GFRAVKFTL</original>
    <variation>VYLLNISKA</variation>
    <location>
        <begin position="107"/>
        <end position="115"/>
    </location>
</feature>
<feature type="splice variant" id="VSP_018472" description="In isoform 2." evidence="4">
    <location>
        <begin position="116"/>
        <end position="496"/>
    </location>
</feature>
<feature type="sequence variant" id="VAR_050720" description="In dbSNP:rs35830741.">
    <original>H</original>
    <variation>P</variation>
    <location>
        <position position="4"/>
    </location>
</feature>
<feature type="sequence conflict" description="In Ref. 1; BAF85445." evidence="5" ref="1">
    <original>C</original>
    <variation>Y</variation>
    <location>
        <position position="3"/>
    </location>
</feature>
<feature type="sequence conflict" description="In Ref. 2; CAD38627." evidence="5" ref="2">
    <original>S</original>
    <variation>G</variation>
    <location>
        <position position="244"/>
    </location>
</feature>
<protein>
    <recommendedName>
        <fullName>T-cell activation inhibitor, mitochondrial</fullName>
    </recommendedName>
    <alternativeName>
        <fullName>Tolerance associated gene-1 protein</fullName>
        <shortName>TOAG-1</shortName>
    </alternativeName>
</protein>
<sequence length="496" mass="57925">MFCHLRPMRRLCLEKIFPHWFPFSRALSGAEAVNALRPFYFAVHPDFFGQHPVEREINENSLKRLSVYLENLQKPGFKSLKPTQLTFYVRETDQSSSDGQEPFSTSGFRAVKFTLHTRDLLSTVLYILNSCSLSVEHIQSLNTNMHTQPLKEAKRMPDRPIKWDKSYYSFTGFKDPDEDLEQVSRVETTLTSWLDNNGKSAVKKLKNSLPLRKELDRLKDELSHQLQLSDIRWQRSWGIAHRCSQLHSLSRLAQQNLETLKKAKGCTIIFTDRSGMSAVGHVMLGTMDVHHHWTKLFERLPSYFDLQRRLMILEDQISYLLGGIQVVYIEELQPVLTLEEYYSLLDVFYNRLLKSRILFHPRSLRGLQMILNSDRYAPSLHELGHFNIPTLCDPANLQWFILTKAQQARENMKRKEELKVIENELIQASTKKFSLEKLYKEPSISSIQMVDCCKRLLEQSLPYLHGMHLCISHFYSVMQDGDLCIPWNWKNGEAIK</sequence>
<accession>Q8N3R3</accession>
<accession>A8K9P1</accession>
<accession>Q0P5T9</accession>
<accession>Q495R1</accession>
<accession>Q495R3</accession>
<accession>Q4G0M4</accession>
<accession>Q6GMU8</accession>
<name>TCAIM_HUMAN</name>
<organism>
    <name type="scientific">Homo sapiens</name>
    <name type="common">Human</name>
    <dbReference type="NCBI Taxonomy" id="9606"/>
    <lineage>
        <taxon>Eukaryota</taxon>
        <taxon>Metazoa</taxon>
        <taxon>Chordata</taxon>
        <taxon>Craniata</taxon>
        <taxon>Vertebrata</taxon>
        <taxon>Euteleostomi</taxon>
        <taxon>Mammalia</taxon>
        <taxon>Eutheria</taxon>
        <taxon>Euarchontoglires</taxon>
        <taxon>Primates</taxon>
        <taxon>Haplorrhini</taxon>
        <taxon>Catarrhini</taxon>
        <taxon>Hominidae</taxon>
        <taxon>Homo</taxon>
    </lineage>
</organism>
<evidence type="ECO:0000250" key="1"/>
<evidence type="ECO:0000255" key="2"/>
<evidence type="ECO:0000303" key="3">
    <source>
    </source>
</evidence>
<evidence type="ECO:0000303" key="4">
    <source>
    </source>
</evidence>
<evidence type="ECO:0000305" key="5"/>
<comment type="function">
    <text evidence="1">May regulate T-cell apoptosis.</text>
</comment>
<comment type="subcellular location">
    <subcellularLocation>
        <location evidence="1">Mitochondrion</location>
    </subcellularLocation>
</comment>
<comment type="alternative products">
    <event type="alternative splicing"/>
    <isoform>
        <id>Q8N3R3-1</id>
        <name>1</name>
        <sequence type="displayed"/>
    </isoform>
    <isoform>
        <id>Q8N3R3-2</id>
        <name>2</name>
        <sequence type="described" ref="VSP_018471 VSP_018472"/>
    </isoform>
    <isoform>
        <id>Q8N3R3-3</id>
        <name>3</name>
        <sequence type="described" ref="VSP_018469 VSP_018470"/>
    </isoform>
    <isoform>
        <id>Q8N3R3-4</id>
        <name>4</name>
        <sequence type="described" ref="VSP_038421"/>
    </isoform>
</comment>
<comment type="miscellaneous">
    <molecule>Isoform 2</molecule>
    <text evidence="5">May be produced at very low levels due to a premature stop codon in the mRNA, leading to nonsense-mediated mRNA decay.</text>
</comment>
<reference key="1">
    <citation type="journal article" date="2004" name="Nat. Genet.">
        <title>Complete sequencing and characterization of 21,243 full-length human cDNAs.</title>
        <authorList>
            <person name="Ota T."/>
            <person name="Suzuki Y."/>
            <person name="Nishikawa T."/>
            <person name="Otsuki T."/>
            <person name="Sugiyama T."/>
            <person name="Irie R."/>
            <person name="Wakamatsu A."/>
            <person name="Hayashi K."/>
            <person name="Sato H."/>
            <person name="Nagai K."/>
            <person name="Kimura K."/>
            <person name="Makita H."/>
            <person name="Sekine M."/>
            <person name="Obayashi M."/>
            <person name="Nishi T."/>
            <person name="Shibahara T."/>
            <person name="Tanaka T."/>
            <person name="Ishii S."/>
            <person name="Yamamoto J."/>
            <person name="Saito K."/>
            <person name="Kawai Y."/>
            <person name="Isono Y."/>
            <person name="Nakamura Y."/>
            <person name="Nagahari K."/>
            <person name="Murakami K."/>
            <person name="Yasuda T."/>
            <person name="Iwayanagi T."/>
            <person name="Wagatsuma M."/>
            <person name="Shiratori A."/>
            <person name="Sudo H."/>
            <person name="Hosoiri T."/>
            <person name="Kaku Y."/>
            <person name="Kodaira H."/>
            <person name="Kondo H."/>
            <person name="Sugawara M."/>
            <person name="Takahashi M."/>
            <person name="Kanda K."/>
            <person name="Yokoi T."/>
            <person name="Furuya T."/>
            <person name="Kikkawa E."/>
            <person name="Omura Y."/>
            <person name="Abe K."/>
            <person name="Kamihara K."/>
            <person name="Katsuta N."/>
            <person name="Sato K."/>
            <person name="Tanikawa M."/>
            <person name="Yamazaki M."/>
            <person name="Ninomiya K."/>
            <person name="Ishibashi T."/>
            <person name="Yamashita H."/>
            <person name="Murakawa K."/>
            <person name="Fujimori K."/>
            <person name="Tanai H."/>
            <person name="Kimata M."/>
            <person name="Watanabe M."/>
            <person name="Hiraoka S."/>
            <person name="Chiba Y."/>
            <person name="Ishida S."/>
            <person name="Ono Y."/>
            <person name="Takiguchi S."/>
            <person name="Watanabe S."/>
            <person name="Yosida M."/>
            <person name="Hotuta T."/>
            <person name="Kusano J."/>
            <person name="Kanehori K."/>
            <person name="Takahashi-Fujii A."/>
            <person name="Hara H."/>
            <person name="Tanase T.-O."/>
            <person name="Nomura Y."/>
            <person name="Togiya S."/>
            <person name="Komai F."/>
            <person name="Hara R."/>
            <person name="Takeuchi K."/>
            <person name="Arita M."/>
            <person name="Imose N."/>
            <person name="Musashino K."/>
            <person name="Yuuki H."/>
            <person name="Oshima A."/>
            <person name="Sasaki N."/>
            <person name="Aotsuka S."/>
            <person name="Yoshikawa Y."/>
            <person name="Matsunawa H."/>
            <person name="Ichihara T."/>
            <person name="Shiohata N."/>
            <person name="Sano S."/>
            <person name="Moriya S."/>
            <person name="Momiyama H."/>
            <person name="Satoh N."/>
            <person name="Takami S."/>
            <person name="Terashima Y."/>
            <person name="Suzuki O."/>
            <person name="Nakagawa S."/>
            <person name="Senoh A."/>
            <person name="Mizoguchi H."/>
            <person name="Goto Y."/>
            <person name="Shimizu F."/>
            <person name="Wakebe H."/>
            <person name="Hishigaki H."/>
            <person name="Watanabe T."/>
            <person name="Sugiyama A."/>
            <person name="Takemoto M."/>
            <person name="Kawakami B."/>
            <person name="Yamazaki M."/>
            <person name="Watanabe K."/>
            <person name="Kumagai A."/>
            <person name="Itakura S."/>
            <person name="Fukuzumi Y."/>
            <person name="Fujimori Y."/>
            <person name="Komiyama M."/>
            <person name="Tashiro H."/>
            <person name="Tanigami A."/>
            <person name="Fujiwara T."/>
            <person name="Ono T."/>
            <person name="Yamada K."/>
            <person name="Fujii Y."/>
            <person name="Ozaki K."/>
            <person name="Hirao M."/>
            <person name="Ohmori Y."/>
            <person name="Kawabata A."/>
            <person name="Hikiji T."/>
            <person name="Kobatake N."/>
            <person name="Inagaki H."/>
            <person name="Ikema Y."/>
            <person name="Okamoto S."/>
            <person name="Okitani R."/>
            <person name="Kawakami T."/>
            <person name="Noguchi S."/>
            <person name="Itoh T."/>
            <person name="Shigeta K."/>
            <person name="Senba T."/>
            <person name="Matsumura K."/>
            <person name="Nakajima Y."/>
            <person name="Mizuno T."/>
            <person name="Morinaga M."/>
            <person name="Sasaki M."/>
            <person name="Togashi T."/>
            <person name="Oyama M."/>
            <person name="Hata H."/>
            <person name="Watanabe M."/>
            <person name="Komatsu T."/>
            <person name="Mizushima-Sugano J."/>
            <person name="Satoh T."/>
            <person name="Shirai Y."/>
            <person name="Takahashi Y."/>
            <person name="Nakagawa K."/>
            <person name="Okumura K."/>
            <person name="Nagase T."/>
            <person name="Nomura N."/>
            <person name="Kikuchi H."/>
            <person name="Masuho Y."/>
            <person name="Yamashita R."/>
            <person name="Nakai K."/>
            <person name="Yada T."/>
            <person name="Nakamura Y."/>
            <person name="Ohara O."/>
            <person name="Isogai T."/>
            <person name="Sugano S."/>
        </authorList>
    </citation>
    <scope>NUCLEOTIDE SEQUENCE [LARGE SCALE MRNA] (ISOFORMS 1; 3 AND 4)</scope>
    <source>
        <tissue>Esophageal carcinoma</tissue>
        <tissue>Tongue</tissue>
    </source>
</reference>
<reference key="2">
    <citation type="journal article" date="2007" name="BMC Genomics">
        <title>The full-ORF clone resource of the German cDNA consortium.</title>
        <authorList>
            <person name="Bechtel S."/>
            <person name="Rosenfelder H."/>
            <person name="Duda A."/>
            <person name="Schmidt C.P."/>
            <person name="Ernst U."/>
            <person name="Wellenreuther R."/>
            <person name="Mehrle A."/>
            <person name="Schuster C."/>
            <person name="Bahr A."/>
            <person name="Bloecker H."/>
            <person name="Heubner D."/>
            <person name="Hoerlein A."/>
            <person name="Michel G."/>
            <person name="Wedler H."/>
            <person name="Koehrer K."/>
            <person name="Ottenwaelder B."/>
            <person name="Poustka A."/>
            <person name="Wiemann S."/>
            <person name="Schupp I."/>
        </authorList>
    </citation>
    <scope>NUCLEOTIDE SEQUENCE [LARGE SCALE MRNA] (ISOFORM 1)</scope>
    <source>
        <tissue>Adipose tissue</tissue>
    </source>
</reference>
<reference key="3">
    <citation type="journal article" date="2006" name="Nature">
        <title>The DNA sequence, annotation and analysis of human chromosome 3.</title>
        <authorList>
            <person name="Muzny D.M."/>
            <person name="Scherer S.E."/>
            <person name="Kaul R."/>
            <person name="Wang J."/>
            <person name="Yu J."/>
            <person name="Sudbrak R."/>
            <person name="Buhay C.J."/>
            <person name="Chen R."/>
            <person name="Cree A."/>
            <person name="Ding Y."/>
            <person name="Dugan-Rocha S."/>
            <person name="Gill R."/>
            <person name="Gunaratne P."/>
            <person name="Harris R.A."/>
            <person name="Hawes A.C."/>
            <person name="Hernandez J."/>
            <person name="Hodgson A.V."/>
            <person name="Hume J."/>
            <person name="Jackson A."/>
            <person name="Khan Z.M."/>
            <person name="Kovar-Smith C."/>
            <person name="Lewis L.R."/>
            <person name="Lozado R.J."/>
            <person name="Metzker M.L."/>
            <person name="Milosavljevic A."/>
            <person name="Miner G.R."/>
            <person name="Morgan M.B."/>
            <person name="Nazareth L.V."/>
            <person name="Scott G."/>
            <person name="Sodergren E."/>
            <person name="Song X.-Z."/>
            <person name="Steffen D."/>
            <person name="Wei S."/>
            <person name="Wheeler D.A."/>
            <person name="Wright M.W."/>
            <person name="Worley K.C."/>
            <person name="Yuan Y."/>
            <person name="Zhang Z."/>
            <person name="Adams C.Q."/>
            <person name="Ansari-Lari M.A."/>
            <person name="Ayele M."/>
            <person name="Brown M.J."/>
            <person name="Chen G."/>
            <person name="Chen Z."/>
            <person name="Clendenning J."/>
            <person name="Clerc-Blankenburg K.P."/>
            <person name="Chen R."/>
            <person name="Chen Z."/>
            <person name="Davis C."/>
            <person name="Delgado O."/>
            <person name="Dinh H.H."/>
            <person name="Dong W."/>
            <person name="Draper H."/>
            <person name="Ernst S."/>
            <person name="Fu G."/>
            <person name="Gonzalez-Garay M.L."/>
            <person name="Garcia D.K."/>
            <person name="Gillett W."/>
            <person name="Gu J."/>
            <person name="Hao B."/>
            <person name="Haugen E."/>
            <person name="Havlak P."/>
            <person name="He X."/>
            <person name="Hennig S."/>
            <person name="Hu S."/>
            <person name="Huang W."/>
            <person name="Jackson L.R."/>
            <person name="Jacob L.S."/>
            <person name="Kelly S.H."/>
            <person name="Kube M."/>
            <person name="Levy R."/>
            <person name="Li Z."/>
            <person name="Liu B."/>
            <person name="Liu J."/>
            <person name="Liu W."/>
            <person name="Lu J."/>
            <person name="Maheshwari M."/>
            <person name="Nguyen B.-V."/>
            <person name="Okwuonu G.O."/>
            <person name="Palmeiri A."/>
            <person name="Pasternak S."/>
            <person name="Perez L.M."/>
            <person name="Phelps K.A."/>
            <person name="Plopper F.J."/>
            <person name="Qiang B."/>
            <person name="Raymond C."/>
            <person name="Rodriguez R."/>
            <person name="Saenphimmachak C."/>
            <person name="Santibanez J."/>
            <person name="Shen H."/>
            <person name="Shen Y."/>
            <person name="Subramanian S."/>
            <person name="Tabor P.E."/>
            <person name="Verduzco D."/>
            <person name="Waldron L."/>
            <person name="Wang J."/>
            <person name="Wang J."/>
            <person name="Wang Q."/>
            <person name="Williams G.A."/>
            <person name="Wong G.K.-S."/>
            <person name="Yao Z."/>
            <person name="Zhang J."/>
            <person name="Zhang X."/>
            <person name="Zhao G."/>
            <person name="Zhou J."/>
            <person name="Zhou Y."/>
            <person name="Nelson D."/>
            <person name="Lehrach H."/>
            <person name="Reinhardt R."/>
            <person name="Naylor S.L."/>
            <person name="Yang H."/>
            <person name="Olson M."/>
            <person name="Weinstock G."/>
            <person name="Gibbs R.A."/>
        </authorList>
    </citation>
    <scope>NUCLEOTIDE SEQUENCE [LARGE SCALE GENOMIC DNA]</scope>
</reference>
<reference key="4">
    <citation type="submission" date="2005-07" db="EMBL/GenBank/DDBJ databases">
        <authorList>
            <person name="Mural R.J."/>
            <person name="Istrail S."/>
            <person name="Sutton G.G."/>
            <person name="Florea L."/>
            <person name="Halpern A.L."/>
            <person name="Mobarry C.M."/>
            <person name="Lippert R."/>
            <person name="Walenz B."/>
            <person name="Shatkay H."/>
            <person name="Dew I."/>
            <person name="Miller J.R."/>
            <person name="Flanigan M.J."/>
            <person name="Edwards N.J."/>
            <person name="Bolanos R."/>
            <person name="Fasulo D."/>
            <person name="Halldorsson B.V."/>
            <person name="Hannenhalli S."/>
            <person name="Turner R."/>
            <person name="Yooseph S."/>
            <person name="Lu F."/>
            <person name="Nusskern D.R."/>
            <person name="Shue B.C."/>
            <person name="Zheng X.H."/>
            <person name="Zhong F."/>
            <person name="Delcher A.L."/>
            <person name="Huson D.H."/>
            <person name="Kravitz S.A."/>
            <person name="Mouchard L."/>
            <person name="Reinert K."/>
            <person name="Remington K.A."/>
            <person name="Clark A.G."/>
            <person name="Waterman M.S."/>
            <person name="Eichler E.E."/>
            <person name="Adams M.D."/>
            <person name="Hunkapiller M.W."/>
            <person name="Myers E.W."/>
            <person name="Venter J.C."/>
        </authorList>
    </citation>
    <scope>NUCLEOTIDE SEQUENCE [LARGE SCALE GENOMIC DNA]</scope>
</reference>
<reference key="5">
    <citation type="journal article" date="2004" name="Genome Res.">
        <title>The status, quality, and expansion of the NIH full-length cDNA project: the Mammalian Gene Collection (MGC).</title>
        <authorList>
            <consortium name="The MGC Project Team"/>
        </authorList>
    </citation>
    <scope>NUCLEOTIDE SEQUENCE [LARGE SCALE MRNA] (ISOFORMS 1; 2; 3 AND 4)</scope>
    <source>
        <tissue>Brain</tissue>
        <tissue>Hippocampus</tissue>
        <tissue>Leukocyte</tissue>
        <tissue>Muscle</tissue>
    </source>
</reference>
<gene>
    <name type="primary">TCAIM</name>
    <name type="synonym">C3orf23</name>
    <name type="synonym">TOAG1</name>
</gene>
<keyword id="KW-0002">3D-structure</keyword>
<keyword id="KW-0025">Alternative splicing</keyword>
<keyword id="KW-0175">Coiled coil</keyword>
<keyword id="KW-0496">Mitochondrion</keyword>
<keyword id="KW-1267">Proteomics identification</keyword>
<keyword id="KW-1185">Reference proteome</keyword>
<proteinExistence type="evidence at protein level"/>
<dbReference type="EMBL" id="AK292756">
    <property type="protein sequence ID" value="BAF85445.1"/>
    <property type="molecule type" value="mRNA"/>
</dbReference>
<dbReference type="EMBL" id="AK056593">
    <property type="protein sequence ID" value="BAG51758.1"/>
    <property type="molecule type" value="mRNA"/>
</dbReference>
<dbReference type="EMBL" id="AK124087">
    <property type="protein sequence ID" value="BAG54004.1"/>
    <property type="molecule type" value="mRNA"/>
</dbReference>
<dbReference type="EMBL" id="AL832473">
    <property type="protein sequence ID" value="CAD38627.1"/>
    <property type="molecule type" value="mRNA"/>
</dbReference>
<dbReference type="EMBL" id="AC104187">
    <property type="status" value="NOT_ANNOTATED_CDS"/>
    <property type="molecule type" value="Genomic_DNA"/>
</dbReference>
<dbReference type="EMBL" id="AC134943">
    <property type="status" value="NOT_ANNOTATED_CDS"/>
    <property type="molecule type" value="Genomic_DNA"/>
</dbReference>
<dbReference type="EMBL" id="CH471055">
    <property type="protein sequence ID" value="EAW64703.1"/>
    <property type="molecule type" value="Genomic_DNA"/>
</dbReference>
<dbReference type="EMBL" id="CH471055">
    <property type="protein sequence ID" value="EAW64704.1"/>
    <property type="molecule type" value="Genomic_DNA"/>
</dbReference>
<dbReference type="EMBL" id="BC009400">
    <property type="protein sequence ID" value="AAH09400.2"/>
    <property type="molecule type" value="mRNA"/>
</dbReference>
<dbReference type="EMBL" id="BC038420">
    <property type="protein sequence ID" value="AAH38420.1"/>
    <property type="molecule type" value="mRNA"/>
</dbReference>
<dbReference type="EMBL" id="BC047231">
    <property type="protein sequence ID" value="AAH47231.1"/>
    <property type="molecule type" value="mRNA"/>
</dbReference>
<dbReference type="EMBL" id="BC062587">
    <property type="protein sequence ID" value="AAH62587.1"/>
    <property type="molecule type" value="mRNA"/>
</dbReference>
<dbReference type="EMBL" id="BC073829">
    <property type="protein sequence ID" value="AAH73829.1"/>
    <property type="molecule type" value="mRNA"/>
</dbReference>
<dbReference type="EMBL" id="BC101059">
    <property type="protein sequence ID" value="AAI01060.1"/>
    <property type="molecule type" value="mRNA"/>
</dbReference>
<dbReference type="EMBL" id="BC101061">
    <property type="protein sequence ID" value="AAI01062.1"/>
    <property type="molecule type" value="mRNA"/>
</dbReference>
<dbReference type="EMBL" id="BC101058">
    <property type="status" value="NOT_ANNOTATED_CDS"/>
    <property type="molecule type" value="mRNA"/>
</dbReference>
<dbReference type="EMBL" id="BC101060">
    <property type="protein sequence ID" value="AAI01061.1"/>
    <property type="molecule type" value="mRNA"/>
</dbReference>
<dbReference type="CCDS" id="CCDS2712.1">
    <molecule id="Q8N3R3-1"/>
</dbReference>
<dbReference type="CCDS" id="CCDS43076.1">
    <molecule id="Q8N3R3-3"/>
</dbReference>
<dbReference type="RefSeq" id="NP_001025010.1">
    <molecule id="Q8N3R3-3"/>
    <property type="nucleotide sequence ID" value="NM_001029839.3"/>
</dbReference>
<dbReference type="RefSeq" id="NP_001025011.1">
    <molecule id="Q8N3R3-3"/>
    <property type="nucleotide sequence ID" value="NM_001029840.3"/>
</dbReference>
<dbReference type="RefSeq" id="NP_001269842.1">
    <molecule id="Q8N3R3-1"/>
    <property type="nucleotide sequence ID" value="NM_001282913.2"/>
</dbReference>
<dbReference type="RefSeq" id="NP_001269843.1">
    <molecule id="Q8N3R3-4"/>
    <property type="nucleotide sequence ID" value="NM_001282914.2"/>
</dbReference>
<dbReference type="RefSeq" id="NP_001269844.1">
    <molecule id="Q8N3R3-4"/>
    <property type="nucleotide sequence ID" value="NM_001282915.2"/>
</dbReference>
<dbReference type="RefSeq" id="NP_776187.2">
    <molecule id="Q8N3R3-1"/>
    <property type="nucleotide sequence ID" value="NM_173826.4"/>
</dbReference>
<dbReference type="RefSeq" id="XP_016861740.1">
    <property type="nucleotide sequence ID" value="XM_017006251.1"/>
</dbReference>
<dbReference type="RefSeq" id="XP_047303979.1">
    <molecule id="Q8N3R3-4"/>
    <property type="nucleotide sequence ID" value="XM_047448023.1"/>
</dbReference>
<dbReference type="RefSeq" id="XP_054202300.1">
    <molecule id="Q8N3R3-4"/>
    <property type="nucleotide sequence ID" value="XM_054346325.1"/>
</dbReference>
<dbReference type="PDB" id="8I0K">
    <property type="method" value="EM"/>
    <property type="resolution" value="2.86 A"/>
    <property type="chains" value="C=188-489"/>
</dbReference>
<dbReference type="PDBsum" id="8I0K"/>
<dbReference type="EMDB" id="EMD-35042"/>
<dbReference type="SMR" id="Q8N3R3"/>
<dbReference type="BioGRID" id="130085">
    <property type="interactions" value="5"/>
</dbReference>
<dbReference type="FunCoup" id="Q8N3R3">
    <property type="interactions" value="1352"/>
</dbReference>
<dbReference type="IntAct" id="Q8N3R3">
    <property type="interactions" value="4"/>
</dbReference>
<dbReference type="STRING" id="9606.ENSP00000341539"/>
<dbReference type="iPTMnet" id="Q8N3R3"/>
<dbReference type="PhosphoSitePlus" id="Q8N3R3"/>
<dbReference type="BioMuta" id="TCAIM"/>
<dbReference type="DMDM" id="116241286"/>
<dbReference type="jPOST" id="Q8N3R3"/>
<dbReference type="MassIVE" id="Q8N3R3"/>
<dbReference type="PaxDb" id="9606-ENSP00000341539"/>
<dbReference type="PeptideAtlas" id="Q8N3R3"/>
<dbReference type="ProteomicsDB" id="71823">
    <molecule id="Q8N3R3-1"/>
</dbReference>
<dbReference type="ProteomicsDB" id="71824">
    <molecule id="Q8N3R3-2"/>
</dbReference>
<dbReference type="ProteomicsDB" id="71826">
    <molecule id="Q8N3R3-4"/>
</dbReference>
<dbReference type="Pumba" id="Q8N3R3"/>
<dbReference type="Antibodypedia" id="53088">
    <property type="antibodies" value="63 antibodies from 10 providers"/>
</dbReference>
<dbReference type="DNASU" id="285343"/>
<dbReference type="Ensembl" id="ENST00000342649.9">
    <molecule id="Q8N3R3-1"/>
    <property type="protein sequence ID" value="ENSP00000341539.4"/>
    <property type="gene ID" value="ENSG00000179152.20"/>
</dbReference>
<dbReference type="Ensembl" id="ENST00000383746.7">
    <molecule id="Q8N3R3-3"/>
    <property type="protein sequence ID" value="ENSP00000373252.3"/>
    <property type="gene ID" value="ENSG00000179152.20"/>
</dbReference>
<dbReference type="Ensembl" id="ENST00000396078.7">
    <molecule id="Q8N3R3-3"/>
    <property type="protein sequence ID" value="ENSP00000379388.3"/>
    <property type="gene ID" value="ENSG00000179152.20"/>
</dbReference>
<dbReference type="Ensembl" id="ENST00000412611.6">
    <molecule id="Q8N3R3-2"/>
    <property type="protein sequence ID" value="ENSP00000392032.2"/>
    <property type="gene ID" value="ENSG00000179152.20"/>
</dbReference>
<dbReference type="Ensembl" id="ENST00000417237.5">
    <molecule id="Q8N3R3-1"/>
    <property type="protein sequence ID" value="ENSP00000402581.1"/>
    <property type="gene ID" value="ENSG00000179152.20"/>
</dbReference>
<dbReference type="Ensembl" id="ENST00000417768.1">
    <molecule id="Q8N3R3-2"/>
    <property type="protein sequence ID" value="ENSP00000402604.1"/>
    <property type="gene ID" value="ENSG00000179152.20"/>
</dbReference>
<dbReference type="Ensembl" id="ENST00000431657.5">
    <molecule id="Q8N3R3-2"/>
    <property type="protein sequence ID" value="ENSP00000387842.1"/>
    <property type="gene ID" value="ENSG00000179152.20"/>
</dbReference>
<dbReference type="GeneID" id="285343"/>
<dbReference type="KEGG" id="hsa:285343"/>
<dbReference type="MANE-Select" id="ENST00000342649.9">
    <property type="protein sequence ID" value="ENSP00000341539.4"/>
    <property type="RefSeq nucleotide sequence ID" value="NM_173826.4"/>
    <property type="RefSeq protein sequence ID" value="NP_776187.2"/>
</dbReference>
<dbReference type="UCSC" id="uc003cnb.5">
    <molecule id="Q8N3R3-1"/>
    <property type="organism name" value="human"/>
</dbReference>
<dbReference type="AGR" id="HGNC:25241"/>
<dbReference type="CTD" id="285343"/>
<dbReference type="DisGeNET" id="285343"/>
<dbReference type="GeneCards" id="TCAIM"/>
<dbReference type="HGNC" id="HGNC:25241">
    <property type="gene designation" value="TCAIM"/>
</dbReference>
<dbReference type="HPA" id="ENSG00000179152">
    <property type="expression patterns" value="Tissue enhanced (liver)"/>
</dbReference>
<dbReference type="MIM" id="620787">
    <property type="type" value="gene"/>
</dbReference>
<dbReference type="neXtProt" id="NX_Q8N3R3"/>
<dbReference type="OpenTargets" id="ENSG00000179152"/>
<dbReference type="PharmGKB" id="PA142672384"/>
<dbReference type="VEuPathDB" id="HostDB:ENSG00000179152"/>
<dbReference type="eggNOG" id="ENOG502QTGC">
    <property type="taxonomic scope" value="Eukaryota"/>
</dbReference>
<dbReference type="GeneTree" id="ENSGT00390000012832"/>
<dbReference type="HOGENOM" id="CLU_2757111_0_0_1"/>
<dbReference type="InParanoid" id="Q8N3R3"/>
<dbReference type="OMA" id="KLHISHY"/>
<dbReference type="OrthoDB" id="4238at2759"/>
<dbReference type="PAN-GO" id="Q8N3R3">
    <property type="GO annotations" value="1 GO annotation based on evolutionary models"/>
</dbReference>
<dbReference type="PhylomeDB" id="Q8N3R3"/>
<dbReference type="TreeFam" id="TF315619"/>
<dbReference type="PathwayCommons" id="Q8N3R3"/>
<dbReference type="SignaLink" id="Q8N3R3"/>
<dbReference type="BioGRID-ORCS" id="285343">
    <property type="hits" value="12 hits in 1163 CRISPR screens"/>
</dbReference>
<dbReference type="ChiTaRS" id="TCAIM">
    <property type="organism name" value="human"/>
</dbReference>
<dbReference type="GeneWiki" id="C3orf23"/>
<dbReference type="GenomeRNAi" id="285343"/>
<dbReference type="Pharos" id="Q8N3R3">
    <property type="development level" value="Tbio"/>
</dbReference>
<dbReference type="PRO" id="PR:Q8N3R3"/>
<dbReference type="Proteomes" id="UP000005640">
    <property type="component" value="Chromosome 3"/>
</dbReference>
<dbReference type="RNAct" id="Q8N3R3">
    <property type="molecule type" value="protein"/>
</dbReference>
<dbReference type="Bgee" id="ENSG00000179152">
    <property type="expression patterns" value="Expressed in right lobe of liver and 181 other cell types or tissues"/>
</dbReference>
<dbReference type="ExpressionAtlas" id="Q8N3R3">
    <property type="expression patterns" value="baseline and differential"/>
</dbReference>
<dbReference type="GO" id="GO:0005739">
    <property type="term" value="C:mitochondrion"/>
    <property type="evidence" value="ECO:0000314"/>
    <property type="project" value="LIFEdb"/>
</dbReference>
<dbReference type="InterPro" id="IPR028031">
    <property type="entry name" value="DUF4460"/>
</dbReference>
<dbReference type="InterPro" id="IPR027989">
    <property type="entry name" value="DUF4461"/>
</dbReference>
<dbReference type="InterPro" id="IPR027986">
    <property type="entry name" value="TCAIM"/>
</dbReference>
<dbReference type="PANTHER" id="PTHR31596">
    <property type="entry name" value="T-CELL ACTIVATION INHIBITOR, MITOCHONDRIAL"/>
    <property type="match status" value="1"/>
</dbReference>
<dbReference type="PANTHER" id="PTHR31596:SF1">
    <property type="entry name" value="T-CELL ACTIVATION INHIBITOR, MITOCHONDRIAL"/>
    <property type="match status" value="1"/>
</dbReference>
<dbReference type="Pfam" id="PF14687">
    <property type="entry name" value="DUF4460"/>
    <property type="match status" value="1"/>
</dbReference>
<dbReference type="Pfam" id="PF14688">
    <property type="entry name" value="DUF4461"/>
    <property type="match status" value="1"/>
</dbReference>